<evidence type="ECO:0000255" key="1">
    <source>
        <dbReference type="HAMAP-Rule" id="MF_00046"/>
    </source>
</evidence>
<evidence type="ECO:0000269" key="2">
    <source>
    </source>
</evidence>
<evidence type="ECO:0000303" key="3">
    <source>
    </source>
</evidence>
<reference key="1">
    <citation type="journal article" date="2001" name="Science">
        <title>Complete genome sequence of a virulent isolate of Streptococcus pneumoniae.</title>
        <authorList>
            <person name="Tettelin H."/>
            <person name="Nelson K.E."/>
            <person name="Paulsen I.T."/>
            <person name="Eisen J.A."/>
            <person name="Read T.D."/>
            <person name="Peterson S.N."/>
            <person name="Heidelberg J.F."/>
            <person name="DeBoy R.T."/>
            <person name="Haft D.H."/>
            <person name="Dodson R.J."/>
            <person name="Durkin A.S."/>
            <person name="Gwinn M.L."/>
            <person name="Kolonay J.F."/>
            <person name="Nelson W.C."/>
            <person name="Peterson J.D."/>
            <person name="Umayam L.A."/>
            <person name="White O."/>
            <person name="Salzberg S.L."/>
            <person name="Lewis M.R."/>
            <person name="Radune D."/>
            <person name="Holtzapple E.K."/>
            <person name="Khouri H.M."/>
            <person name="Wolf A.M."/>
            <person name="Utterback T.R."/>
            <person name="Hansen C.L."/>
            <person name="McDonald L.A."/>
            <person name="Feldblyum T.V."/>
            <person name="Angiuoli S.V."/>
            <person name="Dickinson T."/>
            <person name="Hickey E.K."/>
            <person name="Holt I.E."/>
            <person name="Loftus B.J."/>
            <person name="Yang F."/>
            <person name="Smith H.O."/>
            <person name="Venter J.C."/>
            <person name="Dougherty B.A."/>
            <person name="Morrison D.A."/>
            <person name="Hollingshead S.K."/>
            <person name="Fraser C.M."/>
        </authorList>
    </citation>
    <scope>NUCLEOTIDE SEQUENCE [LARGE SCALE GENOMIC DNA]</scope>
    <source>
        <strain>ATCC BAA-334 / TIGR4</strain>
    </source>
</reference>
<reference key="2">
    <citation type="journal article" date="2013" name="FEMS Microbiol. Lett.">
        <title>Phosphorylation of the Streptococcus pneumoniae cell wall biosynthesis enzyme MurC by a eukaryotic-like Ser/Thr kinase.</title>
        <authorList>
            <person name="Falk S.P."/>
            <person name="Weisblum B."/>
        </authorList>
    </citation>
    <scope>PHOSPHORYLATION</scope>
</reference>
<accession>Q97PS8</accession>
<name>MURC_STRPN</name>
<gene>
    <name evidence="1 3" type="primary">murC</name>
    <name type="ordered locus">SP_1521</name>
</gene>
<keyword id="KW-0067">ATP-binding</keyword>
<keyword id="KW-0131">Cell cycle</keyword>
<keyword id="KW-0132">Cell division</keyword>
<keyword id="KW-0133">Cell shape</keyword>
<keyword id="KW-0961">Cell wall biogenesis/degradation</keyword>
<keyword id="KW-0963">Cytoplasm</keyword>
<keyword id="KW-0436">Ligase</keyword>
<keyword id="KW-0547">Nucleotide-binding</keyword>
<keyword id="KW-0573">Peptidoglycan synthesis</keyword>
<keyword id="KW-0597">Phosphoprotein</keyword>
<keyword id="KW-1185">Reference proteome</keyword>
<sequence>MSKTYHFIGIKGSGMSALALMLHQMGHKVQGSDVEKYYFTQRGLEQAGITILPFDEKNLDGDMEIIAGNAFRPDNNVEIAYADQNGISYKRYHEFLGSFMRDFVSMGVAGAHGKTSTTGMLSHVLSHITDTSFLIGDGTGRGSANAKYFVFESDEYERHFMPYHPEYSIITNIDFDHPDYFTSLEDVFNAFNDYAKQITKGLFVYGEDAELRKITSDAPIYYYGFEAEGNDFVASDLLRSITGSTFTVHFRGQNLGQFHIPTFGRHNIMNATAVIGLLYTAGFDLNLVREHLKTFAGVKRRFTEKIVNDTVIIDDFAHHPTEIIATLDAARQKYPSKEIVAVFQPHTFTRTIALLDDFAHALNQADAVYLAQIYGSAREVDHGDVKVEDLANKINKKHQVITVENVSPLLDHDNAVYVFMGAGDIQTYEYSFERLLSNLTSNVQ</sequence>
<protein>
    <recommendedName>
        <fullName evidence="1">UDP-N-acetylmuramate--L-alanine ligase</fullName>
        <ecNumber evidence="1">6.3.2.8</ecNumber>
    </recommendedName>
    <alternativeName>
        <fullName evidence="1">UDP-N-acetylmuramoyl-L-alanine synthetase</fullName>
    </alternativeName>
</protein>
<dbReference type="EC" id="6.3.2.8" evidence="1"/>
<dbReference type="EMBL" id="AE005672">
    <property type="protein sequence ID" value="AAK75611.1"/>
    <property type="molecule type" value="Genomic_DNA"/>
</dbReference>
<dbReference type="PIR" id="B95177">
    <property type="entry name" value="B95177"/>
</dbReference>
<dbReference type="RefSeq" id="WP_000048088.1">
    <property type="nucleotide sequence ID" value="NZ_CP155539.1"/>
</dbReference>
<dbReference type="SMR" id="Q97PS8"/>
<dbReference type="PaxDb" id="170187-SP_1521"/>
<dbReference type="EnsemblBacteria" id="AAK75611">
    <property type="protein sequence ID" value="AAK75611"/>
    <property type="gene ID" value="SP_1521"/>
</dbReference>
<dbReference type="KEGG" id="spn:SP_1521"/>
<dbReference type="eggNOG" id="COG0773">
    <property type="taxonomic scope" value="Bacteria"/>
</dbReference>
<dbReference type="PhylomeDB" id="Q97PS8"/>
<dbReference type="BioCyc" id="SPNE170187:G1FZB-1539-MONOMER"/>
<dbReference type="UniPathway" id="UPA00219"/>
<dbReference type="Proteomes" id="UP000000585">
    <property type="component" value="Chromosome"/>
</dbReference>
<dbReference type="GO" id="GO:0005737">
    <property type="term" value="C:cytoplasm"/>
    <property type="evidence" value="ECO:0007669"/>
    <property type="project" value="UniProtKB-SubCell"/>
</dbReference>
<dbReference type="GO" id="GO:0005524">
    <property type="term" value="F:ATP binding"/>
    <property type="evidence" value="ECO:0007669"/>
    <property type="project" value="UniProtKB-UniRule"/>
</dbReference>
<dbReference type="GO" id="GO:0008763">
    <property type="term" value="F:UDP-N-acetylmuramate-L-alanine ligase activity"/>
    <property type="evidence" value="ECO:0007669"/>
    <property type="project" value="UniProtKB-UniRule"/>
</dbReference>
<dbReference type="GO" id="GO:0051301">
    <property type="term" value="P:cell division"/>
    <property type="evidence" value="ECO:0007669"/>
    <property type="project" value="UniProtKB-KW"/>
</dbReference>
<dbReference type="GO" id="GO:0071555">
    <property type="term" value="P:cell wall organization"/>
    <property type="evidence" value="ECO:0007669"/>
    <property type="project" value="UniProtKB-KW"/>
</dbReference>
<dbReference type="GO" id="GO:0009252">
    <property type="term" value="P:peptidoglycan biosynthetic process"/>
    <property type="evidence" value="ECO:0007669"/>
    <property type="project" value="UniProtKB-UniRule"/>
</dbReference>
<dbReference type="GO" id="GO:0008360">
    <property type="term" value="P:regulation of cell shape"/>
    <property type="evidence" value="ECO:0007669"/>
    <property type="project" value="UniProtKB-KW"/>
</dbReference>
<dbReference type="Gene3D" id="3.90.190.20">
    <property type="entry name" value="Mur ligase, C-terminal domain"/>
    <property type="match status" value="1"/>
</dbReference>
<dbReference type="Gene3D" id="3.40.1190.10">
    <property type="entry name" value="Mur-like, catalytic domain"/>
    <property type="match status" value="1"/>
</dbReference>
<dbReference type="Gene3D" id="3.40.50.720">
    <property type="entry name" value="NAD(P)-binding Rossmann-like Domain"/>
    <property type="match status" value="1"/>
</dbReference>
<dbReference type="HAMAP" id="MF_00046">
    <property type="entry name" value="MurC"/>
    <property type="match status" value="1"/>
</dbReference>
<dbReference type="InterPro" id="IPR036565">
    <property type="entry name" value="Mur-like_cat_sf"/>
</dbReference>
<dbReference type="InterPro" id="IPR004101">
    <property type="entry name" value="Mur_ligase_C"/>
</dbReference>
<dbReference type="InterPro" id="IPR036615">
    <property type="entry name" value="Mur_ligase_C_dom_sf"/>
</dbReference>
<dbReference type="InterPro" id="IPR013221">
    <property type="entry name" value="Mur_ligase_cen"/>
</dbReference>
<dbReference type="InterPro" id="IPR000713">
    <property type="entry name" value="Mur_ligase_N"/>
</dbReference>
<dbReference type="InterPro" id="IPR050061">
    <property type="entry name" value="MurCDEF_pg_biosynth"/>
</dbReference>
<dbReference type="InterPro" id="IPR005758">
    <property type="entry name" value="UDP-N-AcMur_Ala_ligase_MurC"/>
</dbReference>
<dbReference type="NCBIfam" id="TIGR01082">
    <property type="entry name" value="murC"/>
    <property type="match status" value="1"/>
</dbReference>
<dbReference type="PANTHER" id="PTHR43445:SF3">
    <property type="entry name" value="UDP-N-ACETYLMURAMATE--L-ALANINE LIGASE"/>
    <property type="match status" value="1"/>
</dbReference>
<dbReference type="PANTHER" id="PTHR43445">
    <property type="entry name" value="UDP-N-ACETYLMURAMATE--L-ALANINE LIGASE-RELATED"/>
    <property type="match status" value="1"/>
</dbReference>
<dbReference type="Pfam" id="PF01225">
    <property type="entry name" value="Mur_ligase"/>
    <property type="match status" value="1"/>
</dbReference>
<dbReference type="Pfam" id="PF02875">
    <property type="entry name" value="Mur_ligase_C"/>
    <property type="match status" value="1"/>
</dbReference>
<dbReference type="Pfam" id="PF08245">
    <property type="entry name" value="Mur_ligase_M"/>
    <property type="match status" value="1"/>
</dbReference>
<dbReference type="SUPFAM" id="SSF51984">
    <property type="entry name" value="MurCD N-terminal domain"/>
    <property type="match status" value="1"/>
</dbReference>
<dbReference type="SUPFAM" id="SSF53623">
    <property type="entry name" value="MurD-like peptide ligases, catalytic domain"/>
    <property type="match status" value="1"/>
</dbReference>
<dbReference type="SUPFAM" id="SSF53244">
    <property type="entry name" value="MurD-like peptide ligases, peptide-binding domain"/>
    <property type="match status" value="1"/>
</dbReference>
<comment type="function">
    <text evidence="1">Cell wall formation.</text>
</comment>
<comment type="catalytic activity">
    <reaction evidence="1">
        <text>UDP-N-acetyl-alpha-D-muramate + L-alanine + ATP = UDP-N-acetyl-alpha-D-muramoyl-L-alanine + ADP + phosphate + H(+)</text>
        <dbReference type="Rhea" id="RHEA:23372"/>
        <dbReference type="ChEBI" id="CHEBI:15378"/>
        <dbReference type="ChEBI" id="CHEBI:30616"/>
        <dbReference type="ChEBI" id="CHEBI:43474"/>
        <dbReference type="ChEBI" id="CHEBI:57972"/>
        <dbReference type="ChEBI" id="CHEBI:70757"/>
        <dbReference type="ChEBI" id="CHEBI:83898"/>
        <dbReference type="ChEBI" id="CHEBI:456216"/>
        <dbReference type="EC" id="6.3.2.8"/>
    </reaction>
</comment>
<comment type="pathway">
    <text evidence="1">Cell wall biogenesis; peptidoglycan biosynthesis.</text>
</comment>
<comment type="subcellular location">
    <subcellularLocation>
        <location evidence="1">Cytoplasm</location>
    </subcellularLocation>
</comment>
<comment type="PTM">
    <text evidence="2">Phosphorylated by StkP in vitro. Dephosphorylated by PhpP in vitro.</text>
</comment>
<comment type="similarity">
    <text evidence="1">Belongs to the MurCDEF family.</text>
</comment>
<proteinExistence type="evidence at protein level"/>
<feature type="chain" id="PRO_0000182166" description="UDP-N-acetylmuramate--L-alanine ligase">
    <location>
        <begin position="1"/>
        <end position="444"/>
    </location>
</feature>
<feature type="binding site" evidence="1">
    <location>
        <begin position="110"/>
        <end position="116"/>
    </location>
    <ligand>
        <name>ATP</name>
        <dbReference type="ChEBI" id="CHEBI:30616"/>
    </ligand>
</feature>
<organism>
    <name type="scientific">Streptococcus pneumoniae serotype 4 (strain ATCC BAA-334 / TIGR4)</name>
    <dbReference type="NCBI Taxonomy" id="170187"/>
    <lineage>
        <taxon>Bacteria</taxon>
        <taxon>Bacillati</taxon>
        <taxon>Bacillota</taxon>
        <taxon>Bacilli</taxon>
        <taxon>Lactobacillales</taxon>
        <taxon>Streptococcaceae</taxon>
        <taxon>Streptococcus</taxon>
    </lineage>
</organism>